<gene>
    <name evidence="1" type="primary">hpr</name>
    <name type="ordered locus">BCA_1081</name>
</gene>
<protein>
    <recommendedName>
        <fullName evidence="1">HTH-type transcriptional regulator Hpr</fullName>
    </recommendedName>
    <alternativeName>
        <fullName evidence="1">Protease production regulatory protein Hpr</fullName>
    </alternativeName>
</protein>
<proteinExistence type="inferred from homology"/>
<feature type="chain" id="PRO_1000188793" description="HTH-type transcriptional regulator Hpr">
    <location>
        <begin position="1"/>
        <end position="185"/>
    </location>
</feature>
<feature type="domain" description="HTH marR-type" evidence="1">
    <location>
        <begin position="13"/>
        <end position="157"/>
    </location>
</feature>
<feature type="DNA-binding region" description="H-T-H motif" evidence="1">
    <location>
        <begin position="63"/>
        <end position="86"/>
    </location>
</feature>
<dbReference type="EMBL" id="CP001407">
    <property type="protein sequence ID" value="ACO28709.1"/>
    <property type="molecule type" value="Genomic_DNA"/>
</dbReference>
<dbReference type="RefSeq" id="WP_000834918.1">
    <property type="nucleotide sequence ID" value="NZ_CP009318.1"/>
</dbReference>
<dbReference type="SMR" id="C1EKG1"/>
<dbReference type="KEGG" id="bcx:BCA_1081"/>
<dbReference type="PATRIC" id="fig|572264.18.peg.1029"/>
<dbReference type="Proteomes" id="UP000002210">
    <property type="component" value="Chromosome"/>
</dbReference>
<dbReference type="GO" id="GO:0003677">
    <property type="term" value="F:DNA binding"/>
    <property type="evidence" value="ECO:0007669"/>
    <property type="project" value="UniProtKB-UniRule"/>
</dbReference>
<dbReference type="GO" id="GO:0003700">
    <property type="term" value="F:DNA-binding transcription factor activity"/>
    <property type="evidence" value="ECO:0007669"/>
    <property type="project" value="UniProtKB-UniRule"/>
</dbReference>
<dbReference type="GO" id="GO:0045892">
    <property type="term" value="P:negative regulation of DNA-templated transcription"/>
    <property type="evidence" value="ECO:0007669"/>
    <property type="project" value="UniProtKB-UniRule"/>
</dbReference>
<dbReference type="GO" id="GO:0006950">
    <property type="term" value="P:response to stress"/>
    <property type="evidence" value="ECO:0007669"/>
    <property type="project" value="TreeGrafter"/>
</dbReference>
<dbReference type="GO" id="GO:0030435">
    <property type="term" value="P:sporulation resulting in formation of a cellular spore"/>
    <property type="evidence" value="ECO:0007669"/>
    <property type="project" value="UniProtKB-UniRule"/>
</dbReference>
<dbReference type="FunFam" id="1.10.10.10:FF:000194">
    <property type="entry name" value="HTH-type transcriptional regulator Hpr"/>
    <property type="match status" value="1"/>
</dbReference>
<dbReference type="Gene3D" id="1.10.10.10">
    <property type="entry name" value="Winged helix-like DNA-binding domain superfamily/Winged helix DNA-binding domain"/>
    <property type="match status" value="1"/>
</dbReference>
<dbReference type="HAMAP" id="MF_01911">
    <property type="entry name" value="HTH_type_Hpr"/>
    <property type="match status" value="1"/>
</dbReference>
<dbReference type="InterPro" id="IPR000835">
    <property type="entry name" value="HTH_MarR-typ"/>
</dbReference>
<dbReference type="InterPro" id="IPR023488">
    <property type="entry name" value="HTH_tscrpt_reg_Hpr"/>
</dbReference>
<dbReference type="InterPro" id="IPR039422">
    <property type="entry name" value="MarR/SlyA-like"/>
</dbReference>
<dbReference type="InterPro" id="IPR023187">
    <property type="entry name" value="Tscrpt_reg_MarR-type_CS"/>
</dbReference>
<dbReference type="InterPro" id="IPR036388">
    <property type="entry name" value="WH-like_DNA-bd_sf"/>
</dbReference>
<dbReference type="InterPro" id="IPR036390">
    <property type="entry name" value="WH_DNA-bd_sf"/>
</dbReference>
<dbReference type="NCBIfam" id="NF010349">
    <property type="entry name" value="PRK13777.1"/>
    <property type="match status" value="1"/>
</dbReference>
<dbReference type="PANTHER" id="PTHR33164:SF58">
    <property type="entry name" value="DNA-BINDING TRANSCRIPTIONAL REPRESSOR SCOC"/>
    <property type="match status" value="1"/>
</dbReference>
<dbReference type="PANTHER" id="PTHR33164">
    <property type="entry name" value="TRANSCRIPTIONAL REGULATOR, MARR FAMILY"/>
    <property type="match status" value="1"/>
</dbReference>
<dbReference type="Pfam" id="PF01047">
    <property type="entry name" value="MarR"/>
    <property type="match status" value="1"/>
</dbReference>
<dbReference type="SMART" id="SM00347">
    <property type="entry name" value="HTH_MARR"/>
    <property type="match status" value="1"/>
</dbReference>
<dbReference type="SUPFAM" id="SSF46785">
    <property type="entry name" value="Winged helix' DNA-binding domain"/>
    <property type="match status" value="1"/>
</dbReference>
<dbReference type="PROSITE" id="PS01117">
    <property type="entry name" value="HTH_MARR_1"/>
    <property type="match status" value="1"/>
</dbReference>
<dbReference type="PROSITE" id="PS50995">
    <property type="entry name" value="HTH_MARR_2"/>
    <property type="match status" value="1"/>
</dbReference>
<reference key="1">
    <citation type="submission" date="2009-02" db="EMBL/GenBank/DDBJ databases">
        <title>Genome sequence of Bacillus cereus 03BB102.</title>
        <authorList>
            <person name="Dodson R.J."/>
            <person name="Jackson P."/>
            <person name="Munk A.C."/>
            <person name="Brettin T."/>
            <person name="Bruce D."/>
            <person name="Detter C."/>
            <person name="Tapia R."/>
            <person name="Han C."/>
            <person name="Sutton G."/>
            <person name="Sims D."/>
        </authorList>
    </citation>
    <scope>NUCLEOTIDE SEQUENCE [LARGE SCALE GENOMIC DNA]</scope>
    <source>
        <strain>03BB102</strain>
    </source>
</reference>
<organism>
    <name type="scientific">Bacillus cereus (strain 03BB102)</name>
    <dbReference type="NCBI Taxonomy" id="572264"/>
    <lineage>
        <taxon>Bacteria</taxon>
        <taxon>Bacillati</taxon>
        <taxon>Bacillota</taxon>
        <taxon>Bacilli</taxon>
        <taxon>Bacillales</taxon>
        <taxon>Bacillaceae</taxon>
        <taxon>Bacillus</taxon>
        <taxon>Bacillus cereus group</taxon>
    </lineage>
</organism>
<sequence>MKSGEKDYSVKEAMIFSQRIAQLSKALWKCVEKDWQMWIKPYDLNINEHHILTIAYHLKGASISEIAKFGVMHVSTAFNFSKKLEERGYLVFSKKEDDKRNTYIEITDKGEELLLRLMEEYDPENNSVFNGALALRNFYGKFPENIELIAILRNIYGQDFIDIFEKSLEDIEENFTESDQKLVKK</sequence>
<name>HPR_BACC3</name>
<comment type="function">
    <text evidence="1">Negative regulator of protease production and sporulation.</text>
</comment>
<comment type="subunit">
    <text evidence="1">Homodimer.</text>
</comment>
<accession>C1EKG1</accession>
<keyword id="KW-0238">DNA-binding</keyword>
<keyword id="KW-0678">Repressor</keyword>
<keyword id="KW-0749">Sporulation</keyword>
<keyword id="KW-0804">Transcription</keyword>
<keyword id="KW-0805">Transcription regulation</keyword>
<evidence type="ECO:0000255" key="1">
    <source>
        <dbReference type="HAMAP-Rule" id="MF_01911"/>
    </source>
</evidence>